<proteinExistence type="inferred from homology"/>
<keyword id="KW-0021">Allosteric enzyme</keyword>
<keyword id="KW-0067">ATP-binding</keyword>
<keyword id="KW-0963">Cytoplasm</keyword>
<keyword id="KW-0324">Glycolysis</keyword>
<keyword id="KW-0418">Kinase</keyword>
<keyword id="KW-0460">Magnesium</keyword>
<keyword id="KW-0479">Metal-binding</keyword>
<keyword id="KW-0547">Nucleotide-binding</keyword>
<keyword id="KW-1185">Reference proteome</keyword>
<keyword id="KW-0808">Transferase</keyword>
<feature type="chain" id="PRO_1000059755" description="ATP-dependent 6-phosphofructokinase">
    <location>
        <begin position="1"/>
        <end position="319"/>
    </location>
</feature>
<feature type="active site" description="Proton acceptor" evidence="1">
    <location>
        <position position="127"/>
    </location>
</feature>
<feature type="binding site" evidence="1">
    <location>
        <position position="11"/>
    </location>
    <ligand>
        <name>ATP</name>
        <dbReference type="ChEBI" id="CHEBI:30616"/>
    </ligand>
</feature>
<feature type="binding site" evidence="1">
    <location>
        <begin position="21"/>
        <end position="25"/>
    </location>
    <ligand>
        <name>ADP</name>
        <dbReference type="ChEBI" id="CHEBI:456216"/>
        <note>allosteric activator; ligand shared between dimeric partners</note>
    </ligand>
</feature>
<feature type="binding site" evidence="1">
    <location>
        <begin position="72"/>
        <end position="73"/>
    </location>
    <ligand>
        <name>ATP</name>
        <dbReference type="ChEBI" id="CHEBI:30616"/>
    </ligand>
</feature>
<feature type="binding site" evidence="1">
    <location>
        <begin position="102"/>
        <end position="105"/>
    </location>
    <ligand>
        <name>ATP</name>
        <dbReference type="ChEBI" id="CHEBI:30616"/>
    </ligand>
</feature>
<feature type="binding site" evidence="1">
    <location>
        <position position="103"/>
    </location>
    <ligand>
        <name>Mg(2+)</name>
        <dbReference type="ChEBI" id="CHEBI:18420"/>
        <note>catalytic</note>
    </ligand>
</feature>
<feature type="binding site" description="in other chain" evidence="1">
    <location>
        <begin position="125"/>
        <end position="127"/>
    </location>
    <ligand>
        <name>substrate</name>
        <note>ligand shared between dimeric partners</note>
    </ligand>
</feature>
<feature type="binding site" description="in other chain" evidence="1">
    <location>
        <position position="154"/>
    </location>
    <ligand>
        <name>ADP</name>
        <dbReference type="ChEBI" id="CHEBI:456216"/>
        <note>allosteric activator; ligand shared between dimeric partners</note>
    </ligand>
</feature>
<feature type="binding site" evidence="1">
    <location>
        <position position="162"/>
    </location>
    <ligand>
        <name>substrate</name>
        <note>ligand shared between dimeric partners</note>
    </ligand>
</feature>
<feature type="binding site" description="in other chain" evidence="1">
    <location>
        <begin position="169"/>
        <end position="171"/>
    </location>
    <ligand>
        <name>substrate</name>
        <note>ligand shared between dimeric partners</note>
    </ligand>
</feature>
<feature type="binding site" description="in other chain" evidence="1">
    <location>
        <begin position="185"/>
        <end position="187"/>
    </location>
    <ligand>
        <name>ADP</name>
        <dbReference type="ChEBI" id="CHEBI:456216"/>
        <note>allosteric activator; ligand shared between dimeric partners</note>
    </ligand>
</feature>
<feature type="binding site" description="in other chain" evidence="1">
    <location>
        <position position="211"/>
    </location>
    <ligand>
        <name>ADP</name>
        <dbReference type="ChEBI" id="CHEBI:456216"/>
        <note>allosteric activator; ligand shared between dimeric partners</note>
    </ligand>
</feature>
<feature type="binding site" description="in other chain" evidence="1">
    <location>
        <begin position="213"/>
        <end position="215"/>
    </location>
    <ligand>
        <name>ADP</name>
        <dbReference type="ChEBI" id="CHEBI:456216"/>
        <note>allosteric activator; ligand shared between dimeric partners</note>
    </ligand>
</feature>
<feature type="binding site" description="in other chain" evidence="1">
    <location>
        <position position="222"/>
    </location>
    <ligand>
        <name>substrate</name>
        <note>ligand shared between dimeric partners</note>
    </ligand>
</feature>
<feature type="binding site" evidence="1">
    <location>
        <position position="243"/>
    </location>
    <ligand>
        <name>substrate</name>
        <note>ligand shared between dimeric partners</note>
    </ligand>
</feature>
<feature type="binding site" description="in other chain" evidence="1">
    <location>
        <begin position="249"/>
        <end position="252"/>
    </location>
    <ligand>
        <name>substrate</name>
        <note>ligand shared between dimeric partners</note>
    </ligand>
</feature>
<reference key="1">
    <citation type="journal article" date="2006" name="Nat. Biotechnol.">
        <title>The genome and transcriptomes of the anti-tumor agent Clostridium novyi-NT.</title>
        <authorList>
            <person name="Bettegowda C."/>
            <person name="Huang X."/>
            <person name="Lin J."/>
            <person name="Cheong I."/>
            <person name="Kohli M."/>
            <person name="Szabo S.A."/>
            <person name="Zhang X."/>
            <person name="Diaz L.A. Jr."/>
            <person name="Velculescu V.E."/>
            <person name="Parmigiani G."/>
            <person name="Kinzler K.W."/>
            <person name="Vogelstein B."/>
            <person name="Zhou S."/>
        </authorList>
    </citation>
    <scope>NUCLEOTIDE SEQUENCE [LARGE SCALE GENOMIC DNA]</scope>
    <source>
        <strain>NT</strain>
    </source>
</reference>
<accession>A0PYC8</accession>
<dbReference type="EC" id="2.7.1.11" evidence="1"/>
<dbReference type="EMBL" id="CP000382">
    <property type="protein sequence ID" value="ABK60986.1"/>
    <property type="molecule type" value="Genomic_DNA"/>
</dbReference>
<dbReference type="RefSeq" id="WP_011721388.1">
    <property type="nucleotide sequence ID" value="NC_008593.1"/>
</dbReference>
<dbReference type="SMR" id="A0PYC8"/>
<dbReference type="STRING" id="386415.NT01CX_1297"/>
<dbReference type="KEGG" id="cno:NT01CX_1297"/>
<dbReference type="eggNOG" id="COG0205">
    <property type="taxonomic scope" value="Bacteria"/>
</dbReference>
<dbReference type="HOGENOM" id="CLU_020655_0_1_9"/>
<dbReference type="UniPathway" id="UPA00109">
    <property type="reaction ID" value="UER00182"/>
</dbReference>
<dbReference type="Proteomes" id="UP000008220">
    <property type="component" value="Chromosome"/>
</dbReference>
<dbReference type="GO" id="GO:0005945">
    <property type="term" value="C:6-phosphofructokinase complex"/>
    <property type="evidence" value="ECO:0007669"/>
    <property type="project" value="TreeGrafter"/>
</dbReference>
<dbReference type="GO" id="GO:0003872">
    <property type="term" value="F:6-phosphofructokinase activity"/>
    <property type="evidence" value="ECO:0007669"/>
    <property type="project" value="UniProtKB-UniRule"/>
</dbReference>
<dbReference type="GO" id="GO:0016208">
    <property type="term" value="F:AMP binding"/>
    <property type="evidence" value="ECO:0007669"/>
    <property type="project" value="TreeGrafter"/>
</dbReference>
<dbReference type="GO" id="GO:0005524">
    <property type="term" value="F:ATP binding"/>
    <property type="evidence" value="ECO:0007669"/>
    <property type="project" value="UniProtKB-KW"/>
</dbReference>
<dbReference type="GO" id="GO:0070095">
    <property type="term" value="F:fructose-6-phosphate binding"/>
    <property type="evidence" value="ECO:0007669"/>
    <property type="project" value="TreeGrafter"/>
</dbReference>
<dbReference type="GO" id="GO:0042802">
    <property type="term" value="F:identical protein binding"/>
    <property type="evidence" value="ECO:0007669"/>
    <property type="project" value="TreeGrafter"/>
</dbReference>
<dbReference type="GO" id="GO:0046872">
    <property type="term" value="F:metal ion binding"/>
    <property type="evidence" value="ECO:0007669"/>
    <property type="project" value="UniProtKB-KW"/>
</dbReference>
<dbReference type="GO" id="GO:0048029">
    <property type="term" value="F:monosaccharide binding"/>
    <property type="evidence" value="ECO:0007669"/>
    <property type="project" value="TreeGrafter"/>
</dbReference>
<dbReference type="GO" id="GO:0061621">
    <property type="term" value="P:canonical glycolysis"/>
    <property type="evidence" value="ECO:0007669"/>
    <property type="project" value="TreeGrafter"/>
</dbReference>
<dbReference type="GO" id="GO:0030388">
    <property type="term" value="P:fructose 1,6-bisphosphate metabolic process"/>
    <property type="evidence" value="ECO:0007669"/>
    <property type="project" value="TreeGrafter"/>
</dbReference>
<dbReference type="GO" id="GO:0006002">
    <property type="term" value="P:fructose 6-phosphate metabolic process"/>
    <property type="evidence" value="ECO:0007669"/>
    <property type="project" value="InterPro"/>
</dbReference>
<dbReference type="FunFam" id="3.40.50.450:FF:000001">
    <property type="entry name" value="ATP-dependent 6-phosphofructokinase"/>
    <property type="match status" value="1"/>
</dbReference>
<dbReference type="FunFam" id="3.40.50.460:FF:000002">
    <property type="entry name" value="ATP-dependent 6-phosphofructokinase"/>
    <property type="match status" value="1"/>
</dbReference>
<dbReference type="Gene3D" id="3.40.50.450">
    <property type="match status" value="1"/>
</dbReference>
<dbReference type="Gene3D" id="3.40.50.460">
    <property type="entry name" value="Phosphofructokinase domain"/>
    <property type="match status" value="1"/>
</dbReference>
<dbReference type="HAMAP" id="MF_00339">
    <property type="entry name" value="Phosphofructokinase_I_B1"/>
    <property type="match status" value="1"/>
</dbReference>
<dbReference type="InterPro" id="IPR022953">
    <property type="entry name" value="ATP_PFK"/>
</dbReference>
<dbReference type="InterPro" id="IPR012003">
    <property type="entry name" value="ATP_PFK_prok-type"/>
</dbReference>
<dbReference type="InterPro" id="IPR012828">
    <property type="entry name" value="PFKA_ATP_prok"/>
</dbReference>
<dbReference type="InterPro" id="IPR015912">
    <property type="entry name" value="Phosphofructokinase_CS"/>
</dbReference>
<dbReference type="InterPro" id="IPR000023">
    <property type="entry name" value="Phosphofructokinase_dom"/>
</dbReference>
<dbReference type="InterPro" id="IPR035966">
    <property type="entry name" value="PKF_sf"/>
</dbReference>
<dbReference type="NCBIfam" id="TIGR02482">
    <property type="entry name" value="PFKA_ATP"/>
    <property type="match status" value="1"/>
</dbReference>
<dbReference type="NCBIfam" id="NF002872">
    <property type="entry name" value="PRK03202.1"/>
    <property type="match status" value="1"/>
</dbReference>
<dbReference type="PANTHER" id="PTHR13697:SF4">
    <property type="entry name" value="ATP-DEPENDENT 6-PHOSPHOFRUCTOKINASE"/>
    <property type="match status" value="1"/>
</dbReference>
<dbReference type="PANTHER" id="PTHR13697">
    <property type="entry name" value="PHOSPHOFRUCTOKINASE"/>
    <property type="match status" value="1"/>
</dbReference>
<dbReference type="Pfam" id="PF00365">
    <property type="entry name" value="PFK"/>
    <property type="match status" value="1"/>
</dbReference>
<dbReference type="PIRSF" id="PIRSF000532">
    <property type="entry name" value="ATP_PFK_prok"/>
    <property type="match status" value="1"/>
</dbReference>
<dbReference type="PRINTS" id="PR00476">
    <property type="entry name" value="PHFRCTKINASE"/>
</dbReference>
<dbReference type="SUPFAM" id="SSF53784">
    <property type="entry name" value="Phosphofructokinase"/>
    <property type="match status" value="1"/>
</dbReference>
<dbReference type="PROSITE" id="PS00433">
    <property type="entry name" value="PHOSPHOFRUCTOKINASE"/>
    <property type="match status" value="1"/>
</dbReference>
<gene>
    <name evidence="1" type="primary">pfkA</name>
    <name type="ordered locus">NT01CX_1297</name>
</gene>
<sequence length="319" mass="33980">MKTIAVLTSGGDAPGMNAAIRAVVRTGLDKGLKVMGIQRGYSGLINGEIFEMHRYSVADIIHRGGTILRTARCEEFKTEAGRKKGVNILKAFGIDGVVVIGGDGSFQGAQLLSKLGVKTIGIPGTIDNDLAYTDYTIGFDTATNTVLDAINKLRDTSSSHERVSIVEVMGRGCGDLALFAGIGGGAESVIVPEKEFNEDELCKTILEGKLRGKLHNLIILAEGVGGGEALTKKVQETTGIQTRLTTLGHLQRGGSPSAFDRILASRLGVKAVELLLEGKSSRVVGLRNNKVVDDDIDEALSMKSKFDDELYDIAKILSY</sequence>
<protein>
    <recommendedName>
        <fullName evidence="1">ATP-dependent 6-phosphofructokinase</fullName>
        <shortName evidence="1">ATP-PFK</shortName>
        <shortName evidence="1">Phosphofructokinase</shortName>
        <ecNumber evidence="1">2.7.1.11</ecNumber>
    </recommendedName>
    <alternativeName>
        <fullName evidence="1">Phosphohexokinase</fullName>
    </alternativeName>
</protein>
<organism>
    <name type="scientific">Clostridium novyi (strain NT)</name>
    <dbReference type="NCBI Taxonomy" id="386415"/>
    <lineage>
        <taxon>Bacteria</taxon>
        <taxon>Bacillati</taxon>
        <taxon>Bacillota</taxon>
        <taxon>Clostridia</taxon>
        <taxon>Eubacteriales</taxon>
        <taxon>Clostridiaceae</taxon>
        <taxon>Clostridium</taxon>
    </lineage>
</organism>
<name>PFKA_CLONN</name>
<evidence type="ECO:0000255" key="1">
    <source>
        <dbReference type="HAMAP-Rule" id="MF_00339"/>
    </source>
</evidence>
<comment type="function">
    <text evidence="1">Catalyzes the phosphorylation of D-fructose 6-phosphate to fructose 1,6-bisphosphate by ATP, the first committing step of glycolysis.</text>
</comment>
<comment type="catalytic activity">
    <reaction evidence="1">
        <text>beta-D-fructose 6-phosphate + ATP = beta-D-fructose 1,6-bisphosphate + ADP + H(+)</text>
        <dbReference type="Rhea" id="RHEA:16109"/>
        <dbReference type="ChEBI" id="CHEBI:15378"/>
        <dbReference type="ChEBI" id="CHEBI:30616"/>
        <dbReference type="ChEBI" id="CHEBI:32966"/>
        <dbReference type="ChEBI" id="CHEBI:57634"/>
        <dbReference type="ChEBI" id="CHEBI:456216"/>
        <dbReference type="EC" id="2.7.1.11"/>
    </reaction>
</comment>
<comment type="cofactor">
    <cofactor evidence="1">
        <name>Mg(2+)</name>
        <dbReference type="ChEBI" id="CHEBI:18420"/>
    </cofactor>
</comment>
<comment type="activity regulation">
    <text evidence="1">Allosterically activated by ADP and other diphosphonucleosides, and allosterically inhibited by phosphoenolpyruvate.</text>
</comment>
<comment type="pathway">
    <text evidence="1">Carbohydrate degradation; glycolysis; D-glyceraldehyde 3-phosphate and glycerone phosphate from D-glucose: step 3/4.</text>
</comment>
<comment type="subunit">
    <text evidence="1">Homotetramer.</text>
</comment>
<comment type="subcellular location">
    <subcellularLocation>
        <location evidence="1">Cytoplasm</location>
    </subcellularLocation>
</comment>
<comment type="similarity">
    <text evidence="1">Belongs to the phosphofructokinase type A (PFKA) family. ATP-dependent PFK group I subfamily. Prokaryotic clade 'B1' sub-subfamily.</text>
</comment>